<proteinExistence type="evidence at transcript level"/>
<evidence type="ECO:0000250" key="1">
    <source>
        <dbReference type="UniProtKB" id="Q53F39"/>
    </source>
</evidence>
<evidence type="ECO:0000255" key="2"/>
<evidence type="ECO:0000305" key="3"/>
<feature type="chain" id="PRO_0000315731" description="Metallophosphoesterase 1">
    <location>
        <begin position="1"/>
        <end position="398"/>
    </location>
</feature>
<feature type="transmembrane region" description="Helical" evidence="2">
    <location>
        <begin position="25"/>
        <end position="45"/>
    </location>
</feature>
<feature type="transmembrane region" description="Helical" evidence="2">
    <location>
        <begin position="359"/>
        <end position="379"/>
    </location>
</feature>
<feature type="short sequence motif" description="Di-lysine motif" evidence="1">
    <location>
        <begin position="394"/>
        <end position="398"/>
    </location>
</feature>
<feature type="binding site" evidence="1">
    <location>
        <position position="75"/>
    </location>
    <ligand>
        <name>a divalent metal cation</name>
        <dbReference type="ChEBI" id="CHEBI:60240"/>
        <label>2</label>
    </ligand>
</feature>
<feature type="binding site" evidence="1">
    <location>
        <position position="117"/>
    </location>
    <ligand>
        <name>a divalent metal cation</name>
        <dbReference type="ChEBI" id="CHEBI:60240"/>
        <label>1</label>
    </ligand>
</feature>
<feature type="binding site" evidence="1">
    <location>
        <position position="117"/>
    </location>
    <ligand>
        <name>a divalent metal cation</name>
        <dbReference type="ChEBI" id="CHEBI:60240"/>
        <label>2</label>
    </ligand>
</feature>
<feature type="binding site" evidence="1">
    <location>
        <position position="155"/>
    </location>
    <ligand>
        <name>a divalent metal cation</name>
        <dbReference type="ChEBI" id="CHEBI:60240"/>
        <label>1</label>
    </ligand>
</feature>
<feature type="binding site" evidence="1">
    <location>
        <position position="251"/>
    </location>
    <ligand>
        <name>a divalent metal cation</name>
        <dbReference type="ChEBI" id="CHEBI:60240"/>
        <label>1</label>
    </ligand>
</feature>
<feature type="binding site" evidence="1">
    <location>
        <position position="251"/>
    </location>
    <ligand>
        <name>a divalent metal cation</name>
        <dbReference type="ChEBI" id="CHEBI:60240"/>
        <label>2</label>
    </ligand>
</feature>
<feature type="binding site" evidence="1">
    <location>
        <position position="305"/>
    </location>
    <ligand>
        <name>a divalent metal cation</name>
        <dbReference type="ChEBI" id="CHEBI:60240"/>
        <label>1</label>
    </ligand>
</feature>
<feature type="binding site" evidence="1">
    <location>
        <position position="307"/>
    </location>
    <ligand>
        <name>a divalent metal cation</name>
        <dbReference type="ChEBI" id="CHEBI:60240"/>
        <label>2</label>
    </ligand>
</feature>
<reference key="1">
    <citation type="journal article" date="2005" name="Genome Biol.">
        <title>Full-length cDNAs from chicken bursal lymphocytes to facilitate gene function analysis.</title>
        <authorList>
            <person name="Caldwell R.B."/>
            <person name="Kierzek A.M."/>
            <person name="Arakawa H."/>
            <person name="Bezzubov Y."/>
            <person name="Zaim J."/>
            <person name="Fiedler P."/>
            <person name="Kutter S."/>
            <person name="Blagodatski A."/>
            <person name="Kostovska D."/>
            <person name="Koter M."/>
            <person name="Plachy J."/>
            <person name="Carninci P."/>
            <person name="Hayashizaki Y."/>
            <person name="Buerstedde J.-M."/>
        </authorList>
    </citation>
    <scope>NUCLEOTIDE SEQUENCE [LARGE SCALE MRNA]</scope>
    <source>
        <strain>CB</strain>
        <tissue>Bursa of Fabricius</tissue>
    </source>
</reference>
<name>MPPE1_CHICK</name>
<organism>
    <name type="scientific">Gallus gallus</name>
    <name type="common">Chicken</name>
    <dbReference type="NCBI Taxonomy" id="9031"/>
    <lineage>
        <taxon>Eukaryota</taxon>
        <taxon>Metazoa</taxon>
        <taxon>Chordata</taxon>
        <taxon>Craniata</taxon>
        <taxon>Vertebrata</taxon>
        <taxon>Euteleostomi</taxon>
        <taxon>Archelosauria</taxon>
        <taxon>Archosauria</taxon>
        <taxon>Dinosauria</taxon>
        <taxon>Saurischia</taxon>
        <taxon>Theropoda</taxon>
        <taxon>Coelurosauria</taxon>
        <taxon>Aves</taxon>
        <taxon>Neognathae</taxon>
        <taxon>Galloanserae</taxon>
        <taxon>Galliformes</taxon>
        <taxon>Phasianidae</taxon>
        <taxon>Phasianinae</taxon>
        <taxon>Gallus</taxon>
    </lineage>
</organism>
<comment type="function">
    <text evidence="1">Metallophosphoesterase that catalyzes the removal of a side-chain ethanolamine-phosphate (EtNP) from the second mannose of the GPI-anchor protein intermediate. Participates in the glycan remodeling steps of GPI-anchor maturation to allow an efficient transport of GPI-anchor proteins from the endoplasmic reticulum to the Golgi.</text>
</comment>
<comment type="cofactor">
    <cofactor evidence="1">
        <name>Mn(2+)</name>
        <dbReference type="ChEBI" id="CHEBI:29035"/>
    </cofactor>
    <text evidence="1">Binds 2 manganese ions per subunit.</text>
</comment>
<comment type="subcellular location">
    <subcellularLocation>
        <location evidence="1">Endoplasmic reticulum-Golgi intermediate compartment membrane</location>
        <topology evidence="2">Multi-pass membrane protein</topology>
    </subcellularLocation>
    <text evidence="1">Also localizes to endoplasmic reticulum exit site.</text>
</comment>
<comment type="domain">
    <text evidence="1">The di-lysine motif (KxKxx) acts as an endoplasmic reticulum retrieval signal.</text>
</comment>
<comment type="similarity">
    <text evidence="3">Belongs to the metallophosphoesterase superfamily. MPPE1 family.</text>
</comment>
<dbReference type="EC" id="3.1.-.-" evidence="1"/>
<dbReference type="EMBL" id="AJ720202">
    <property type="protein sequence ID" value="CAG31861.1"/>
    <property type="molecule type" value="mRNA"/>
</dbReference>
<dbReference type="RefSeq" id="NP_001034372.1">
    <property type="nucleotide sequence ID" value="NM_001039283.2"/>
</dbReference>
<dbReference type="RefSeq" id="XP_015137964.1">
    <property type="nucleotide sequence ID" value="XM_015282478.1"/>
</dbReference>
<dbReference type="RefSeq" id="XP_015137965.1">
    <property type="nucleotide sequence ID" value="XM_015282479.1"/>
</dbReference>
<dbReference type="FunCoup" id="Q5ZK82">
    <property type="interactions" value="657"/>
</dbReference>
<dbReference type="STRING" id="9031.ENSGALP00000045371"/>
<dbReference type="PaxDb" id="9031-ENSGALP00000022355"/>
<dbReference type="GeneID" id="421031"/>
<dbReference type="KEGG" id="gga:421031"/>
<dbReference type="CTD" id="65258"/>
<dbReference type="VEuPathDB" id="HostDB:geneid_421031"/>
<dbReference type="eggNOG" id="KOG3662">
    <property type="taxonomic scope" value="Eukaryota"/>
</dbReference>
<dbReference type="HOGENOM" id="CLU_047168_2_0_1"/>
<dbReference type="InParanoid" id="Q5ZK82"/>
<dbReference type="OrthoDB" id="9984693at2759"/>
<dbReference type="PhylomeDB" id="Q5ZK82"/>
<dbReference type="TreeFam" id="TF314437"/>
<dbReference type="PRO" id="PR:Q5ZK82"/>
<dbReference type="Proteomes" id="UP000000539">
    <property type="component" value="Chromosome 2"/>
</dbReference>
<dbReference type="Bgee" id="ENSGALG00000013794">
    <property type="expression patterns" value="Expressed in kidney and 14 other cell types or tissues"/>
</dbReference>
<dbReference type="GO" id="GO:0070971">
    <property type="term" value="C:endoplasmic reticulum exit site"/>
    <property type="evidence" value="ECO:0000250"/>
    <property type="project" value="UniProtKB"/>
</dbReference>
<dbReference type="GO" id="GO:0033116">
    <property type="term" value="C:endoplasmic reticulum-Golgi intermediate compartment membrane"/>
    <property type="evidence" value="ECO:0007669"/>
    <property type="project" value="UniProtKB-SubCell"/>
</dbReference>
<dbReference type="GO" id="GO:0005794">
    <property type="term" value="C:Golgi apparatus"/>
    <property type="evidence" value="ECO:0007669"/>
    <property type="project" value="UniProtKB-SubCell"/>
</dbReference>
<dbReference type="GO" id="GO:0062050">
    <property type="term" value="F:GPI-mannose ethanolamine phosphate phosphodiesterase activity"/>
    <property type="evidence" value="ECO:0000250"/>
    <property type="project" value="UniProtKB"/>
</dbReference>
<dbReference type="GO" id="GO:0030145">
    <property type="term" value="F:manganese ion binding"/>
    <property type="evidence" value="ECO:0000250"/>
    <property type="project" value="UniProtKB"/>
</dbReference>
<dbReference type="GO" id="GO:0006888">
    <property type="term" value="P:endoplasmic reticulum to Golgi vesicle-mediated transport"/>
    <property type="evidence" value="ECO:0000250"/>
    <property type="project" value="UniProtKB"/>
</dbReference>
<dbReference type="GO" id="GO:0006506">
    <property type="term" value="P:GPI anchor biosynthetic process"/>
    <property type="evidence" value="ECO:0000250"/>
    <property type="project" value="UniProtKB"/>
</dbReference>
<dbReference type="CDD" id="cd08165">
    <property type="entry name" value="MPP_MPPE1"/>
    <property type="match status" value="1"/>
</dbReference>
<dbReference type="FunFam" id="3.60.21.10:FF:000022">
    <property type="entry name" value="Putative metallophosphoesterase 1"/>
    <property type="match status" value="1"/>
</dbReference>
<dbReference type="Gene3D" id="3.60.21.10">
    <property type="match status" value="1"/>
</dbReference>
<dbReference type="InterPro" id="IPR004843">
    <property type="entry name" value="Calcineurin-like_PHP_ApaH"/>
</dbReference>
<dbReference type="InterPro" id="IPR029052">
    <property type="entry name" value="Metallo-depent_PP-like"/>
</dbReference>
<dbReference type="InterPro" id="IPR039541">
    <property type="entry name" value="MPP_MPPE1"/>
</dbReference>
<dbReference type="InterPro" id="IPR033308">
    <property type="entry name" value="PGAP5/Cdc1/Ted1"/>
</dbReference>
<dbReference type="PANTHER" id="PTHR13315">
    <property type="entry name" value="METALLO PHOSPHOESTERASE RELATED"/>
    <property type="match status" value="1"/>
</dbReference>
<dbReference type="PANTHER" id="PTHR13315:SF0">
    <property type="entry name" value="METALLOPHOSPHOESTERASE 1"/>
    <property type="match status" value="1"/>
</dbReference>
<dbReference type="Pfam" id="PF00149">
    <property type="entry name" value="Metallophos"/>
    <property type="match status" value="1"/>
</dbReference>
<dbReference type="SUPFAM" id="SSF56300">
    <property type="entry name" value="Metallo-dependent phosphatases"/>
    <property type="match status" value="1"/>
</dbReference>
<keyword id="KW-0931">ER-Golgi transport</keyword>
<keyword id="KW-0337">GPI-anchor biosynthesis</keyword>
<keyword id="KW-0378">Hydrolase</keyword>
<keyword id="KW-0464">Manganese</keyword>
<keyword id="KW-0472">Membrane</keyword>
<keyword id="KW-0479">Metal-binding</keyword>
<keyword id="KW-1185">Reference proteome</keyword>
<keyword id="KW-0812">Transmembrane</keyword>
<keyword id="KW-1133">Transmembrane helix</keyword>
<keyword id="KW-0813">Transport</keyword>
<accession>Q5ZK82</accession>
<gene>
    <name evidence="1" type="primary">MPPE1</name>
    <name evidence="1" type="synonym">PGAP5</name>
    <name type="ORF">RCJMB04_12i13</name>
</gene>
<sequence>MLSPNLTIVKNLPLKKRICFLLKLVCFVSSVLIFCEFFIYYLVIFQCRWPDVKRDAHTGNEETPASVLKAMFLADTHLLGEIKGHWLDKLRREWQMERSFQTALWLLQPDIVFILGDVFDEGKWDSPQAWADDVRRFQKMFKYPVTTELVVIVGNHDIGFHYEMTTYKVHRFEKVFNFTSGKLITRKGTNFVLVNSVAMEGDGCTLCRTAEAKLVALSHRLNCSLQEPNHPQKRCSDAEKPPASQPILLQHYPLYRKSDAECSGEDAAPPEEKNIPFKEKYDVLSQEASQKLLWWFRPRLILSGHTHSACQVLHTGGIPEISIPSFSWRNRNNPSFIMGSITPTDFSLHKCFLPRESRVFAIYWAAGALLVVLVLAHFQLLTPPFYFAQRLISKHKAA</sequence>
<protein>
    <recommendedName>
        <fullName evidence="1">Metallophosphoesterase 1</fullName>
        <ecNumber evidence="1">3.1.-.-</ecNumber>
    </recommendedName>
    <alternativeName>
        <fullName>Post-GPI attachment to proteins factor 5</fullName>
    </alternativeName>
</protein>